<dbReference type="EMBL" id="CP000507">
    <property type="protein sequence ID" value="ABL99519.1"/>
    <property type="molecule type" value="Genomic_DNA"/>
</dbReference>
<dbReference type="RefSeq" id="WP_011759428.1">
    <property type="nucleotide sequence ID" value="NC_008700.1"/>
</dbReference>
<dbReference type="SMR" id="A1S563"/>
<dbReference type="STRING" id="326297.Sama_1312"/>
<dbReference type="KEGG" id="saz:Sama_1312"/>
<dbReference type="eggNOG" id="COG0353">
    <property type="taxonomic scope" value="Bacteria"/>
</dbReference>
<dbReference type="HOGENOM" id="CLU_060739_1_2_6"/>
<dbReference type="OrthoDB" id="9802672at2"/>
<dbReference type="Proteomes" id="UP000009175">
    <property type="component" value="Chromosome"/>
</dbReference>
<dbReference type="GO" id="GO:0003677">
    <property type="term" value="F:DNA binding"/>
    <property type="evidence" value="ECO:0007669"/>
    <property type="project" value="UniProtKB-UniRule"/>
</dbReference>
<dbReference type="GO" id="GO:0008270">
    <property type="term" value="F:zinc ion binding"/>
    <property type="evidence" value="ECO:0007669"/>
    <property type="project" value="UniProtKB-KW"/>
</dbReference>
<dbReference type="GO" id="GO:0006310">
    <property type="term" value="P:DNA recombination"/>
    <property type="evidence" value="ECO:0007669"/>
    <property type="project" value="UniProtKB-UniRule"/>
</dbReference>
<dbReference type="GO" id="GO:0006281">
    <property type="term" value="P:DNA repair"/>
    <property type="evidence" value="ECO:0007669"/>
    <property type="project" value="UniProtKB-UniRule"/>
</dbReference>
<dbReference type="CDD" id="cd01025">
    <property type="entry name" value="TOPRIM_recR"/>
    <property type="match status" value="1"/>
</dbReference>
<dbReference type="Gene3D" id="3.40.1360.10">
    <property type="match status" value="1"/>
</dbReference>
<dbReference type="Gene3D" id="6.10.250.240">
    <property type="match status" value="1"/>
</dbReference>
<dbReference type="Gene3D" id="1.10.8.420">
    <property type="entry name" value="RecR Domain 1"/>
    <property type="match status" value="1"/>
</dbReference>
<dbReference type="HAMAP" id="MF_00017">
    <property type="entry name" value="RecR"/>
    <property type="match status" value="1"/>
</dbReference>
<dbReference type="InterPro" id="IPR000093">
    <property type="entry name" value="DNA_Rcmb_RecR"/>
</dbReference>
<dbReference type="InterPro" id="IPR023627">
    <property type="entry name" value="Rcmb_RecR"/>
</dbReference>
<dbReference type="InterPro" id="IPR015967">
    <property type="entry name" value="Rcmb_RecR_Znf"/>
</dbReference>
<dbReference type="InterPro" id="IPR006171">
    <property type="entry name" value="TOPRIM_dom"/>
</dbReference>
<dbReference type="InterPro" id="IPR034137">
    <property type="entry name" value="TOPRIM_RecR"/>
</dbReference>
<dbReference type="NCBIfam" id="TIGR00615">
    <property type="entry name" value="recR"/>
    <property type="match status" value="1"/>
</dbReference>
<dbReference type="PANTHER" id="PTHR30446">
    <property type="entry name" value="RECOMBINATION PROTEIN RECR"/>
    <property type="match status" value="1"/>
</dbReference>
<dbReference type="PANTHER" id="PTHR30446:SF0">
    <property type="entry name" value="RECOMBINATION PROTEIN RECR"/>
    <property type="match status" value="1"/>
</dbReference>
<dbReference type="Pfam" id="PF21175">
    <property type="entry name" value="RecR_C"/>
    <property type="match status" value="1"/>
</dbReference>
<dbReference type="Pfam" id="PF21176">
    <property type="entry name" value="RecR_HhH"/>
    <property type="match status" value="1"/>
</dbReference>
<dbReference type="Pfam" id="PF02132">
    <property type="entry name" value="RecR_ZnF"/>
    <property type="match status" value="1"/>
</dbReference>
<dbReference type="Pfam" id="PF13662">
    <property type="entry name" value="Toprim_4"/>
    <property type="match status" value="1"/>
</dbReference>
<dbReference type="SMART" id="SM00493">
    <property type="entry name" value="TOPRIM"/>
    <property type="match status" value="1"/>
</dbReference>
<dbReference type="SUPFAM" id="SSF111304">
    <property type="entry name" value="Recombination protein RecR"/>
    <property type="match status" value="1"/>
</dbReference>
<dbReference type="PROSITE" id="PS50880">
    <property type="entry name" value="TOPRIM"/>
    <property type="match status" value="1"/>
</dbReference>
<name>RECR_SHEAM</name>
<keyword id="KW-0227">DNA damage</keyword>
<keyword id="KW-0233">DNA recombination</keyword>
<keyword id="KW-0234">DNA repair</keyword>
<keyword id="KW-0479">Metal-binding</keyword>
<keyword id="KW-1185">Reference proteome</keyword>
<keyword id="KW-0862">Zinc</keyword>
<keyword id="KW-0863">Zinc-finger</keyword>
<feature type="chain" id="PRO_1000001600" description="Recombination protein RecR">
    <location>
        <begin position="1"/>
        <end position="199"/>
    </location>
</feature>
<feature type="domain" description="Toprim" evidence="1">
    <location>
        <begin position="81"/>
        <end position="176"/>
    </location>
</feature>
<feature type="zinc finger region" description="C4-type" evidence="1">
    <location>
        <begin position="57"/>
        <end position="72"/>
    </location>
</feature>
<sequence>MKFSPLVDELIQSLRCLPGVGPKSAQRMAFALLESDRKAGIRLADTLSRAMSDVGHCQKCRTFTEQSLCPICSSSRRGEADTLCVVETPADVLAIESGGHFQGRYFVLQGHLSPLDGIGPEELGLSLLEGQLVGGGISELILATNPTVEGDATAHYIADIARRAGVAVSRIAHGVPVGGELEYVDSTTLALSFNGRLPL</sequence>
<reference key="1">
    <citation type="submission" date="2006-12" db="EMBL/GenBank/DDBJ databases">
        <title>Complete sequence of Shewanella amazonensis SB2B.</title>
        <authorList>
            <consortium name="US DOE Joint Genome Institute"/>
            <person name="Copeland A."/>
            <person name="Lucas S."/>
            <person name="Lapidus A."/>
            <person name="Barry K."/>
            <person name="Detter J.C."/>
            <person name="Glavina del Rio T."/>
            <person name="Hammon N."/>
            <person name="Israni S."/>
            <person name="Dalin E."/>
            <person name="Tice H."/>
            <person name="Pitluck S."/>
            <person name="Munk A.C."/>
            <person name="Brettin T."/>
            <person name="Bruce D."/>
            <person name="Han C."/>
            <person name="Tapia R."/>
            <person name="Gilna P."/>
            <person name="Schmutz J."/>
            <person name="Larimer F."/>
            <person name="Land M."/>
            <person name="Hauser L."/>
            <person name="Kyrpides N."/>
            <person name="Mikhailova N."/>
            <person name="Fredrickson J."/>
            <person name="Richardson P."/>
        </authorList>
    </citation>
    <scope>NUCLEOTIDE SEQUENCE [LARGE SCALE GENOMIC DNA]</scope>
    <source>
        <strain>ATCC BAA-1098 / SB2B</strain>
    </source>
</reference>
<protein>
    <recommendedName>
        <fullName evidence="1">Recombination protein RecR</fullName>
    </recommendedName>
</protein>
<gene>
    <name evidence="1" type="primary">recR</name>
    <name type="ordered locus">Sama_1312</name>
</gene>
<evidence type="ECO:0000255" key="1">
    <source>
        <dbReference type="HAMAP-Rule" id="MF_00017"/>
    </source>
</evidence>
<organism>
    <name type="scientific">Shewanella amazonensis (strain ATCC BAA-1098 / SB2B)</name>
    <dbReference type="NCBI Taxonomy" id="326297"/>
    <lineage>
        <taxon>Bacteria</taxon>
        <taxon>Pseudomonadati</taxon>
        <taxon>Pseudomonadota</taxon>
        <taxon>Gammaproteobacteria</taxon>
        <taxon>Alteromonadales</taxon>
        <taxon>Shewanellaceae</taxon>
        <taxon>Shewanella</taxon>
    </lineage>
</organism>
<accession>A1S563</accession>
<comment type="function">
    <text evidence="1">May play a role in DNA repair. It seems to be involved in an RecBC-independent recombinational process of DNA repair. It may act with RecF and RecO.</text>
</comment>
<comment type="similarity">
    <text evidence="1">Belongs to the RecR family.</text>
</comment>
<proteinExistence type="inferred from homology"/>